<accession>B2RRE7</accession>
<accession>B7ZNI5</accession>
<accession>Q80TL3</accession>
<accession>Q9CUN2</accession>
<sequence length="1107" mass="123055">MEAAVGAPDGVDQGGVGPLEDETPMDAYLRKLGLYRKLVAKDGSCLFRAVAEQVLHSQSRHVEVRMACIRYLRENREKFEAFIEGSFEEYLKRLENPQEWVGQVEISALSLMYRKDFVIYQEPNVSPSHVTENNFPEKVLLCFSNGNHYDIVYPITYKDSSAMCQSLLYELLYEKVFKTDVSKIMMGLEASEVAEESNSEISDSEDDSCKSKSTAATDVNGFKPSGSENPKNNGNSADLPLSRKVLKSLNPAVYRNVEYEIWLKSKQAQQKRDYSIAAGLQYEVGDKCHQVRLDHNGKLSNADIHGVHSENGLVLSEELGKKHTPKNLKPPPPESWNTVSGKKMKKPNSGQNFHSDTDYRGPKNLNKPIKAPSALPPRLQHPSSGVRQHAFSSHSTGSQSQKSSSEHKNLSRMPSQITRKPDRERAEDFDHVSRESYYFGLSPEERREKQAIEESRLLYEIQNRDEQAFPALSSSSVSQSPSQNSNACVPRKSSHARDRKGSMRRADAEERKDKDSLRGHTHVDKKPEPSTLEISDDKCTRVSSPSKSKKECPSPVEQKPAEHIPLSNPAPLLVSPEVHLTPAVPSLPATVPAWPSEPTTFGPTGVPAQIPILSVTQTTGPDAAVSQAHLTPSPVPVSIQAVNQPLMPLPQTMSLYQDPLYPGFPCSEKGDRAIAPPYSLCQTGEDLPKDKNILRFFFNLGVKAYSCPMWAPHSYLYPLHQAYMAACRMYPKVPVPVYPQNTWFQEAPPAQSESDCPCTDAHYSLHPEASVNGQMPQAEMGPPAFASPLVIPPSQVSEGHGQLSYQPELESENPGQLLHAEYEESLSGKNMYPQQSFGPNPFLGPVPIAPPFFPHVWYGYPFQGFVENPVMRQNIVLPPDDKGELDLPLENLDLSKECDSVSAVDEFPDARVEGAHSLSAASVSSKHEGRVEQSSQTRKADIDLASGSSAVEGKGHPPTQILNREREPGSAEPEPKRTIQSLKEKPEKVKDPKTAADVVSPGANSVDRLQRPKEESSEDENEVSNILRSGRSKQFYNQTYGSRKYKSDWGSSGRGGYQHVRGEESWKGQPNRSRDEGYQYHRHVRGRPYRGDRRRSGMGDGHRGQHT</sequence>
<feature type="chain" id="PRO_0000394458" description="OTU domain-containing protein 4">
    <location>
        <begin position="1"/>
        <end position="1107"/>
    </location>
</feature>
<feature type="domain" description="OTU" evidence="4">
    <location>
        <begin position="34"/>
        <end position="155"/>
    </location>
</feature>
<feature type="region of interest" description="Cys-loop" evidence="2">
    <location>
        <begin position="39"/>
        <end position="45"/>
    </location>
</feature>
<feature type="region of interest" description="Variable-loop" evidence="2">
    <location>
        <begin position="94"/>
        <end position="104"/>
    </location>
</feature>
<feature type="region of interest" description="His-loop" evidence="2">
    <location>
        <begin position="143"/>
        <end position="148"/>
    </location>
</feature>
<feature type="region of interest" description="Disordered" evidence="5">
    <location>
        <begin position="195"/>
        <end position="239"/>
    </location>
</feature>
<feature type="region of interest" description="Disordered" evidence="5">
    <location>
        <begin position="322"/>
        <end position="431"/>
    </location>
</feature>
<feature type="region of interest" description="Disordered" evidence="5">
    <location>
        <begin position="470"/>
        <end position="568"/>
    </location>
</feature>
<feature type="region of interest" description="Disordered" evidence="5">
    <location>
        <begin position="918"/>
        <end position="1107"/>
    </location>
</feature>
<feature type="compositionally biased region" description="Acidic residues" evidence="5">
    <location>
        <begin position="195"/>
        <end position="206"/>
    </location>
</feature>
<feature type="compositionally biased region" description="Polar residues" evidence="5">
    <location>
        <begin position="226"/>
        <end position="236"/>
    </location>
</feature>
<feature type="compositionally biased region" description="Low complexity" evidence="5">
    <location>
        <begin position="392"/>
        <end position="403"/>
    </location>
</feature>
<feature type="compositionally biased region" description="Basic and acidic residues" evidence="5">
    <location>
        <begin position="419"/>
        <end position="431"/>
    </location>
</feature>
<feature type="compositionally biased region" description="Low complexity" evidence="5">
    <location>
        <begin position="473"/>
        <end position="486"/>
    </location>
</feature>
<feature type="compositionally biased region" description="Basic and acidic residues" evidence="5">
    <location>
        <begin position="495"/>
        <end position="528"/>
    </location>
</feature>
<feature type="compositionally biased region" description="Basic and acidic residues" evidence="5">
    <location>
        <begin position="963"/>
        <end position="994"/>
    </location>
</feature>
<feature type="compositionally biased region" description="Polar residues" evidence="5">
    <location>
        <begin position="1032"/>
        <end position="1041"/>
    </location>
</feature>
<feature type="compositionally biased region" description="Basic and acidic residues" evidence="5">
    <location>
        <begin position="1060"/>
        <end position="1079"/>
    </location>
</feature>
<feature type="compositionally biased region" description="Basic and acidic residues" evidence="5">
    <location>
        <begin position="1089"/>
        <end position="1107"/>
    </location>
</feature>
<feature type="active site" evidence="3">
    <location>
        <position position="42"/>
    </location>
</feature>
<feature type="active site" description="Nucleophile" evidence="6">
    <location>
        <position position="45"/>
    </location>
</feature>
<feature type="active site" evidence="2">
    <location>
        <position position="148"/>
    </location>
</feature>
<feature type="modified residue" description="N-acetylmethionine" evidence="1">
    <location>
        <position position="1"/>
    </location>
</feature>
<feature type="modified residue" description="Phosphotyrosine" evidence="1">
    <location>
        <position position="120"/>
    </location>
</feature>
<feature type="modified residue" description="Phosphoserine" evidence="1">
    <location>
        <position position="126"/>
    </location>
</feature>
<feature type="modified residue" description="Phosphoserine" evidence="1">
    <location>
        <position position="128"/>
    </location>
</feature>
<feature type="modified residue" description="Phosphothreonine" evidence="1">
    <location>
        <position position="131"/>
    </location>
</feature>
<feature type="modified residue" description="Phosphoserine" evidence="1">
    <location>
        <position position="166"/>
    </location>
</feature>
<feature type="modified residue" description="Phosphoserine" evidence="1">
    <location>
        <position position="199"/>
    </location>
</feature>
<feature type="modified residue" description="Phosphoserine" evidence="6">
    <location>
        <position position="202"/>
    </location>
</feature>
<feature type="modified residue" description="Phosphoserine" evidence="1">
    <location>
        <position position="204"/>
    </location>
</feature>
<feature type="modified residue" description="Phosphoserine" evidence="1">
    <location>
        <position position="340"/>
    </location>
</feature>
<feature type="modified residue" description="Phosphotyrosine" evidence="14">
    <location>
        <position position="438"/>
    </location>
</feature>
<feature type="modified residue" description="Phosphoserine" evidence="16">
    <location>
        <position position="442"/>
    </location>
</feature>
<feature type="modified residue" description="Phosphotyrosine" evidence="1">
    <location>
        <position position="459"/>
    </location>
</feature>
<feature type="modified residue" description="Phosphoserine" evidence="1">
    <location>
        <position position="544"/>
    </location>
</feature>
<feature type="modified residue" description="Phosphoserine" evidence="1">
    <location>
        <position position="895"/>
    </location>
</feature>
<feature type="modified residue" description="Phosphoserine" evidence="13 16">
    <location>
        <position position="1000"/>
    </location>
</feature>
<feature type="modified residue" description="Phosphoserine" evidence="13 16">
    <location>
        <position position="1005"/>
    </location>
</feature>
<feature type="modified residue" description="Phosphoserine" evidence="13 15 16">
    <location>
        <position position="1016"/>
    </location>
</feature>
<feature type="modified residue" description="Phosphoserine" evidence="13 15 16">
    <location>
        <position position="1017"/>
    </location>
</feature>
<feature type="modified residue" description="Phosphoserine" evidence="1">
    <location>
        <position position="1042"/>
    </location>
</feature>
<feature type="mutagenesis site" description="Abolishes 'Lys-48'- and 'Lys-63'-specific deubiquitinase activity. Impairs 'Lys-63'-specific deubiquitination of TRAF6 substrate." evidence="6">
    <original>C</original>
    <variation>A</variation>
    <location>
        <position position="45"/>
    </location>
</feature>
<feature type="sequence conflict" description="In Ref. 1; AAI45260." evidence="8" ref="1">
    <location>
        <position position="290"/>
    </location>
</feature>
<name>OTUD4_MOUSE</name>
<gene>
    <name evidence="10 12" type="primary">Otud4</name>
    <name evidence="7 11" type="synonym">Kiaa1046</name>
</gene>
<dbReference type="EC" id="3.4.19.12" evidence="9"/>
<dbReference type="EMBL" id="BC138373">
    <property type="protein sequence ID" value="AAI38374.1"/>
    <property type="molecule type" value="mRNA"/>
</dbReference>
<dbReference type="EMBL" id="BC145259">
    <property type="protein sequence ID" value="AAI45260.1"/>
    <property type="molecule type" value="mRNA"/>
</dbReference>
<dbReference type="EMBL" id="AK122429">
    <property type="protein sequence ID" value="BAC65711.1"/>
    <property type="molecule type" value="mRNA"/>
</dbReference>
<dbReference type="EMBL" id="AK015275">
    <property type="protein sequence ID" value="BAB29777.1"/>
    <property type="molecule type" value="mRNA"/>
</dbReference>
<dbReference type="CCDS" id="CCDS57625.1"/>
<dbReference type="RefSeq" id="NP_001074633.1">
    <property type="nucleotide sequence ID" value="NM_001081164.1"/>
</dbReference>
<dbReference type="RefSeq" id="NP_001242962.1">
    <property type="nucleotide sequence ID" value="NM_001256033.1"/>
</dbReference>
<dbReference type="SMR" id="B2RRE7"/>
<dbReference type="BioGRID" id="216375">
    <property type="interactions" value="10"/>
</dbReference>
<dbReference type="FunCoup" id="B2RRE7">
    <property type="interactions" value="2449"/>
</dbReference>
<dbReference type="IntAct" id="B2RRE7">
    <property type="interactions" value="4"/>
</dbReference>
<dbReference type="MINT" id="B2RRE7"/>
<dbReference type="STRING" id="10090.ENSMUSP00000133939"/>
<dbReference type="MEROPS" id="C85.002"/>
<dbReference type="GlyGen" id="B2RRE7">
    <property type="glycosylation" value="1 site, 1 O-linked glycan (1 site)"/>
</dbReference>
<dbReference type="iPTMnet" id="B2RRE7"/>
<dbReference type="PhosphoSitePlus" id="B2RRE7"/>
<dbReference type="SwissPalm" id="B2RRE7"/>
<dbReference type="jPOST" id="B2RRE7"/>
<dbReference type="PaxDb" id="10090-ENSMUSP00000133939"/>
<dbReference type="PeptideAtlas" id="B2RRE7"/>
<dbReference type="ProteomicsDB" id="294406"/>
<dbReference type="Pumba" id="B2RRE7"/>
<dbReference type="Antibodypedia" id="27452">
    <property type="antibodies" value="186 antibodies from 32 providers"/>
</dbReference>
<dbReference type="Ensembl" id="ENSMUST00000173078.8">
    <property type="protein sequence ID" value="ENSMUSP00000133939.2"/>
    <property type="gene ID" value="ENSMUSG00000036990.14"/>
</dbReference>
<dbReference type="GeneID" id="73945"/>
<dbReference type="KEGG" id="mmu:73945"/>
<dbReference type="UCSC" id="uc009mir.1">
    <property type="organism name" value="mouse"/>
</dbReference>
<dbReference type="AGR" id="MGI:1098801"/>
<dbReference type="CTD" id="54726"/>
<dbReference type="MGI" id="MGI:1098801">
    <property type="gene designation" value="Otud4"/>
</dbReference>
<dbReference type="VEuPathDB" id="HostDB:ENSMUSG00000036990"/>
<dbReference type="eggNOG" id="KOG2605">
    <property type="taxonomic scope" value="Eukaryota"/>
</dbReference>
<dbReference type="GeneTree" id="ENSGT00940000160512"/>
<dbReference type="HOGENOM" id="CLU_291170_0_0_1"/>
<dbReference type="InParanoid" id="B2RRE7"/>
<dbReference type="OMA" id="FFPPVWY"/>
<dbReference type="OrthoDB" id="10017659at2759"/>
<dbReference type="PhylomeDB" id="B2RRE7"/>
<dbReference type="TreeFam" id="TF326812"/>
<dbReference type="BioGRID-ORCS" id="73945">
    <property type="hits" value="5 hits in 78 CRISPR screens"/>
</dbReference>
<dbReference type="ChiTaRS" id="Otud4">
    <property type="organism name" value="mouse"/>
</dbReference>
<dbReference type="PRO" id="PR:B2RRE7"/>
<dbReference type="Proteomes" id="UP000000589">
    <property type="component" value="Chromosome 8"/>
</dbReference>
<dbReference type="RNAct" id="B2RRE7">
    <property type="molecule type" value="protein"/>
</dbReference>
<dbReference type="Bgee" id="ENSMUSG00000036990">
    <property type="expression patterns" value="Expressed in otic placode and 256 other cell types or tissues"/>
</dbReference>
<dbReference type="ExpressionAtlas" id="B2RRE7">
    <property type="expression patterns" value="baseline and differential"/>
</dbReference>
<dbReference type="GO" id="GO:0005829">
    <property type="term" value="C:cytosol"/>
    <property type="evidence" value="ECO:0007669"/>
    <property type="project" value="Ensembl"/>
</dbReference>
<dbReference type="GO" id="GO:0005634">
    <property type="term" value="C:nucleus"/>
    <property type="evidence" value="ECO:0007669"/>
    <property type="project" value="UniProtKB-SubCell"/>
</dbReference>
<dbReference type="GO" id="GO:0004843">
    <property type="term" value="F:cysteine-type deubiquitinase activity"/>
    <property type="evidence" value="ECO:0000250"/>
    <property type="project" value="UniProtKB"/>
</dbReference>
<dbReference type="GO" id="GO:0061578">
    <property type="term" value="F:K63-linked deubiquitinase activity"/>
    <property type="evidence" value="ECO:0000314"/>
    <property type="project" value="UniProtKB"/>
</dbReference>
<dbReference type="GO" id="GO:0060090">
    <property type="term" value="F:molecular adaptor activity"/>
    <property type="evidence" value="ECO:0000250"/>
    <property type="project" value="UniProtKB"/>
</dbReference>
<dbReference type="GO" id="GO:0140374">
    <property type="term" value="P:antiviral innate immune response"/>
    <property type="evidence" value="ECO:0007669"/>
    <property type="project" value="Ensembl"/>
</dbReference>
<dbReference type="GO" id="GO:0006307">
    <property type="term" value="P:DNA alkylation repair"/>
    <property type="evidence" value="ECO:0000250"/>
    <property type="project" value="UniProtKB"/>
</dbReference>
<dbReference type="GO" id="GO:2000660">
    <property type="term" value="P:negative regulation of interleukin-1-mediated signaling pathway"/>
    <property type="evidence" value="ECO:0000314"/>
    <property type="project" value="UniProtKB"/>
</dbReference>
<dbReference type="GO" id="GO:0034122">
    <property type="term" value="P:negative regulation of toll-like receptor signaling pathway"/>
    <property type="evidence" value="ECO:0000314"/>
    <property type="project" value="UniProtKB"/>
</dbReference>
<dbReference type="GO" id="GO:0035871">
    <property type="term" value="P:protein K11-linked deubiquitination"/>
    <property type="evidence" value="ECO:0007669"/>
    <property type="project" value="Ensembl"/>
</dbReference>
<dbReference type="GO" id="GO:0071108">
    <property type="term" value="P:protein K48-linked deubiquitination"/>
    <property type="evidence" value="ECO:0000250"/>
    <property type="project" value="UniProtKB"/>
</dbReference>
<dbReference type="GO" id="GO:0070536">
    <property type="term" value="P:protein K63-linked deubiquitination"/>
    <property type="evidence" value="ECO:0000314"/>
    <property type="project" value="UniProtKB"/>
</dbReference>
<dbReference type="GO" id="GO:0006508">
    <property type="term" value="P:proteolysis"/>
    <property type="evidence" value="ECO:0007669"/>
    <property type="project" value="UniProtKB-KW"/>
</dbReference>
<dbReference type="GO" id="GO:1903093">
    <property type="term" value="P:regulation of protein K48-linked deubiquitination"/>
    <property type="evidence" value="ECO:0000250"/>
    <property type="project" value="UniProtKB"/>
</dbReference>
<dbReference type="CDD" id="cd22794">
    <property type="entry name" value="OTU_OTUD4"/>
    <property type="match status" value="1"/>
</dbReference>
<dbReference type="FunFam" id="3.90.70.80:FF:000013">
    <property type="entry name" value="OTU domain-containing protein 4"/>
    <property type="match status" value="1"/>
</dbReference>
<dbReference type="Gene3D" id="3.90.70.80">
    <property type="match status" value="1"/>
</dbReference>
<dbReference type="InterPro" id="IPR003323">
    <property type="entry name" value="OTU_dom"/>
</dbReference>
<dbReference type="InterPro" id="IPR038765">
    <property type="entry name" value="Papain-like_cys_pep_sf"/>
</dbReference>
<dbReference type="InterPro" id="IPR050704">
    <property type="entry name" value="Peptidase_C85-like"/>
</dbReference>
<dbReference type="PANTHER" id="PTHR12419">
    <property type="entry name" value="OTU DOMAIN CONTAINING PROTEIN"/>
    <property type="match status" value="1"/>
</dbReference>
<dbReference type="PANTHER" id="PTHR12419:SF9">
    <property type="entry name" value="OTU DOMAIN-CONTAINING PROTEIN 4"/>
    <property type="match status" value="1"/>
</dbReference>
<dbReference type="Pfam" id="PF02338">
    <property type="entry name" value="OTU"/>
    <property type="match status" value="1"/>
</dbReference>
<dbReference type="SUPFAM" id="SSF54001">
    <property type="entry name" value="Cysteine proteinases"/>
    <property type="match status" value="1"/>
</dbReference>
<dbReference type="PROSITE" id="PS50802">
    <property type="entry name" value="OTU"/>
    <property type="match status" value="1"/>
</dbReference>
<reference key="1">
    <citation type="journal article" date="2004" name="Genome Res.">
        <title>The status, quality, and expansion of the NIH full-length cDNA project: the Mammalian Gene Collection (MGC).</title>
        <authorList>
            <consortium name="The MGC Project Team"/>
        </authorList>
    </citation>
    <scope>NUCLEOTIDE SEQUENCE [LARGE SCALE MRNA]</scope>
    <source>
        <tissue>Brain</tissue>
    </source>
</reference>
<reference key="2">
    <citation type="journal article" date="2003" name="DNA Res.">
        <title>Prediction of the coding sequences of mouse homologues of KIAA gene: II. The complete nucleotide sequences of 400 mouse KIAA-homologous cDNAs identified by screening of terminal sequences of cDNA clones randomly sampled from size-fractionated libraries.</title>
        <authorList>
            <person name="Okazaki N."/>
            <person name="Kikuno R."/>
            <person name="Ohara R."/>
            <person name="Inamoto S."/>
            <person name="Aizawa H."/>
            <person name="Yuasa S."/>
            <person name="Nakajima D."/>
            <person name="Nagase T."/>
            <person name="Ohara O."/>
            <person name="Koga H."/>
        </authorList>
    </citation>
    <scope>NUCLEOTIDE SEQUENCE [LARGE SCALE MRNA] OF 161-1107</scope>
    <source>
        <tissue>Brain</tissue>
    </source>
</reference>
<reference key="3">
    <citation type="journal article" date="2005" name="Science">
        <title>The transcriptional landscape of the mammalian genome.</title>
        <authorList>
            <person name="Carninci P."/>
            <person name="Kasukawa T."/>
            <person name="Katayama S."/>
            <person name="Gough J."/>
            <person name="Frith M.C."/>
            <person name="Maeda N."/>
            <person name="Oyama R."/>
            <person name="Ravasi T."/>
            <person name="Lenhard B."/>
            <person name="Wells C."/>
            <person name="Kodzius R."/>
            <person name="Shimokawa K."/>
            <person name="Bajic V.B."/>
            <person name="Brenner S.E."/>
            <person name="Batalov S."/>
            <person name="Forrest A.R."/>
            <person name="Zavolan M."/>
            <person name="Davis M.J."/>
            <person name="Wilming L.G."/>
            <person name="Aidinis V."/>
            <person name="Allen J.E."/>
            <person name="Ambesi-Impiombato A."/>
            <person name="Apweiler R."/>
            <person name="Aturaliya R.N."/>
            <person name="Bailey T.L."/>
            <person name="Bansal M."/>
            <person name="Baxter L."/>
            <person name="Beisel K.W."/>
            <person name="Bersano T."/>
            <person name="Bono H."/>
            <person name="Chalk A.M."/>
            <person name="Chiu K.P."/>
            <person name="Choudhary V."/>
            <person name="Christoffels A."/>
            <person name="Clutterbuck D.R."/>
            <person name="Crowe M.L."/>
            <person name="Dalla E."/>
            <person name="Dalrymple B.P."/>
            <person name="de Bono B."/>
            <person name="Della Gatta G."/>
            <person name="di Bernardo D."/>
            <person name="Down T."/>
            <person name="Engstrom P."/>
            <person name="Fagiolini M."/>
            <person name="Faulkner G."/>
            <person name="Fletcher C.F."/>
            <person name="Fukushima T."/>
            <person name="Furuno M."/>
            <person name="Futaki S."/>
            <person name="Gariboldi M."/>
            <person name="Georgii-Hemming P."/>
            <person name="Gingeras T.R."/>
            <person name="Gojobori T."/>
            <person name="Green R.E."/>
            <person name="Gustincich S."/>
            <person name="Harbers M."/>
            <person name="Hayashi Y."/>
            <person name="Hensch T.K."/>
            <person name="Hirokawa N."/>
            <person name="Hill D."/>
            <person name="Huminiecki L."/>
            <person name="Iacono M."/>
            <person name="Ikeo K."/>
            <person name="Iwama A."/>
            <person name="Ishikawa T."/>
            <person name="Jakt M."/>
            <person name="Kanapin A."/>
            <person name="Katoh M."/>
            <person name="Kawasawa Y."/>
            <person name="Kelso J."/>
            <person name="Kitamura H."/>
            <person name="Kitano H."/>
            <person name="Kollias G."/>
            <person name="Krishnan S.P."/>
            <person name="Kruger A."/>
            <person name="Kummerfeld S.K."/>
            <person name="Kurochkin I.V."/>
            <person name="Lareau L.F."/>
            <person name="Lazarevic D."/>
            <person name="Lipovich L."/>
            <person name="Liu J."/>
            <person name="Liuni S."/>
            <person name="McWilliam S."/>
            <person name="Madan Babu M."/>
            <person name="Madera M."/>
            <person name="Marchionni L."/>
            <person name="Matsuda H."/>
            <person name="Matsuzawa S."/>
            <person name="Miki H."/>
            <person name="Mignone F."/>
            <person name="Miyake S."/>
            <person name="Morris K."/>
            <person name="Mottagui-Tabar S."/>
            <person name="Mulder N."/>
            <person name="Nakano N."/>
            <person name="Nakauchi H."/>
            <person name="Ng P."/>
            <person name="Nilsson R."/>
            <person name="Nishiguchi S."/>
            <person name="Nishikawa S."/>
            <person name="Nori F."/>
            <person name="Ohara O."/>
            <person name="Okazaki Y."/>
            <person name="Orlando V."/>
            <person name="Pang K.C."/>
            <person name="Pavan W.J."/>
            <person name="Pavesi G."/>
            <person name="Pesole G."/>
            <person name="Petrovsky N."/>
            <person name="Piazza S."/>
            <person name="Reed J."/>
            <person name="Reid J.F."/>
            <person name="Ring B.Z."/>
            <person name="Ringwald M."/>
            <person name="Rost B."/>
            <person name="Ruan Y."/>
            <person name="Salzberg S.L."/>
            <person name="Sandelin A."/>
            <person name="Schneider C."/>
            <person name="Schoenbach C."/>
            <person name="Sekiguchi K."/>
            <person name="Semple C.A."/>
            <person name="Seno S."/>
            <person name="Sessa L."/>
            <person name="Sheng Y."/>
            <person name="Shibata Y."/>
            <person name="Shimada H."/>
            <person name="Shimada K."/>
            <person name="Silva D."/>
            <person name="Sinclair B."/>
            <person name="Sperling S."/>
            <person name="Stupka E."/>
            <person name="Sugiura K."/>
            <person name="Sultana R."/>
            <person name="Takenaka Y."/>
            <person name="Taki K."/>
            <person name="Tammoja K."/>
            <person name="Tan S.L."/>
            <person name="Tang S."/>
            <person name="Taylor M.S."/>
            <person name="Tegner J."/>
            <person name="Teichmann S.A."/>
            <person name="Ueda H.R."/>
            <person name="van Nimwegen E."/>
            <person name="Verardo R."/>
            <person name="Wei C.L."/>
            <person name="Yagi K."/>
            <person name="Yamanishi H."/>
            <person name="Zabarovsky E."/>
            <person name="Zhu S."/>
            <person name="Zimmer A."/>
            <person name="Hide W."/>
            <person name="Bult C."/>
            <person name="Grimmond S.M."/>
            <person name="Teasdale R.D."/>
            <person name="Liu E.T."/>
            <person name="Brusic V."/>
            <person name="Quackenbush J."/>
            <person name="Wahlestedt C."/>
            <person name="Mattick J.S."/>
            <person name="Hume D.A."/>
            <person name="Kai C."/>
            <person name="Sasaki D."/>
            <person name="Tomaru Y."/>
            <person name="Fukuda S."/>
            <person name="Kanamori-Katayama M."/>
            <person name="Suzuki M."/>
            <person name="Aoki J."/>
            <person name="Arakawa T."/>
            <person name="Iida J."/>
            <person name="Imamura K."/>
            <person name="Itoh M."/>
            <person name="Kato T."/>
            <person name="Kawaji H."/>
            <person name="Kawagashira N."/>
            <person name="Kawashima T."/>
            <person name="Kojima M."/>
            <person name="Kondo S."/>
            <person name="Konno H."/>
            <person name="Nakano K."/>
            <person name="Ninomiya N."/>
            <person name="Nishio T."/>
            <person name="Okada M."/>
            <person name="Plessy C."/>
            <person name="Shibata K."/>
            <person name="Shiraki T."/>
            <person name="Suzuki S."/>
            <person name="Tagami M."/>
            <person name="Waki K."/>
            <person name="Watahiki A."/>
            <person name="Okamura-Oho Y."/>
            <person name="Suzuki H."/>
            <person name="Kawai J."/>
            <person name="Hayashizaki Y."/>
        </authorList>
    </citation>
    <scope>NUCLEOTIDE SEQUENCE [LARGE SCALE MRNA] OF 930-1107</scope>
    <source>
        <strain>C57BL/6J</strain>
        <tissue>Testis</tissue>
    </source>
</reference>
<reference key="4">
    <citation type="journal article" date="2007" name="J. Immunol.">
        <title>Quantitative time-resolved phosphoproteomic analysis of mast cell signaling.</title>
        <authorList>
            <person name="Cao L."/>
            <person name="Yu K."/>
            <person name="Banh C."/>
            <person name="Nguyen V."/>
            <person name="Ritz A."/>
            <person name="Raphael B.J."/>
            <person name="Kawakami Y."/>
            <person name="Kawakami T."/>
            <person name="Salomon A.R."/>
        </authorList>
    </citation>
    <scope>PHOSPHORYLATION [LARGE SCALE ANALYSIS] AT TYR-438</scope>
    <scope>IDENTIFICATION BY MASS SPECTROMETRY [LARGE SCALE ANALYSIS]</scope>
    <source>
        <tissue>Mast cell</tissue>
    </source>
</reference>
<reference key="5">
    <citation type="journal article" date="2007" name="Proc. Natl. Acad. Sci. U.S.A.">
        <title>Large-scale phosphorylation analysis of mouse liver.</title>
        <authorList>
            <person name="Villen J."/>
            <person name="Beausoleil S.A."/>
            <person name="Gerber S.A."/>
            <person name="Gygi S.P."/>
        </authorList>
    </citation>
    <scope>PHOSPHORYLATION [LARGE SCALE ANALYSIS] AT SER-1000; SER-1005; SER-1016 AND SER-1017</scope>
    <scope>IDENTIFICATION BY MASS SPECTROMETRY [LARGE SCALE ANALYSIS]</scope>
    <source>
        <tissue>Liver</tissue>
    </source>
</reference>
<reference key="6">
    <citation type="journal article" date="2009" name="Immunity">
        <title>The phagosomal proteome in interferon-gamma-activated macrophages.</title>
        <authorList>
            <person name="Trost M."/>
            <person name="English L."/>
            <person name="Lemieux S."/>
            <person name="Courcelles M."/>
            <person name="Desjardins M."/>
            <person name="Thibault P."/>
        </authorList>
    </citation>
    <scope>PHOSPHORYLATION [LARGE SCALE ANALYSIS] AT SER-1016 AND SER-1017</scope>
    <scope>IDENTIFICATION BY MASS SPECTROMETRY [LARGE SCALE ANALYSIS]</scope>
</reference>
<reference key="7">
    <citation type="journal article" date="2010" name="Cell">
        <title>A tissue-specific atlas of mouse protein phosphorylation and expression.</title>
        <authorList>
            <person name="Huttlin E.L."/>
            <person name="Jedrychowski M.P."/>
            <person name="Elias J.E."/>
            <person name="Goswami T."/>
            <person name="Rad R."/>
            <person name="Beausoleil S.A."/>
            <person name="Villen J."/>
            <person name="Haas W."/>
            <person name="Sowa M.E."/>
            <person name="Gygi S.P."/>
        </authorList>
    </citation>
    <scope>PHOSPHORYLATION [LARGE SCALE ANALYSIS] AT SER-442; SER-1000; SER-1005; SER-1016 AND SER-1017</scope>
    <scope>IDENTIFICATION BY MASS SPECTROMETRY [LARGE SCALE ANALYSIS]</scope>
    <source>
        <tissue>Brain</tissue>
        <tissue>Brown adipose tissue</tissue>
        <tissue>Heart</tissue>
        <tissue>Kidney</tissue>
        <tissue>Liver</tissue>
        <tissue>Lung</tissue>
        <tissue>Pancreas</tissue>
        <tissue>Spleen</tissue>
        <tissue>Testis</tissue>
    </source>
</reference>
<reference key="8">
    <citation type="journal article" date="2018" name="Mol. Cell">
        <title>OTUD4 Is a Phospho-Activated K63 Deubiquitinase that Regulates MyD88-Dependent Signaling.</title>
        <authorList>
            <person name="Zhao Y."/>
            <person name="Mudge M.C."/>
            <person name="Soll J.M."/>
            <person name="Rodrigues R.B."/>
            <person name="Byrum A.K."/>
            <person name="Schwarzkopf E.A."/>
            <person name="Bradstreet T.R."/>
            <person name="Gygi S.P."/>
            <person name="Edelson B.T."/>
            <person name="Mosammaparast N."/>
        </authorList>
    </citation>
    <scope>FUNCTION</scope>
    <scope>CATALYTIC ACTIVITY</scope>
    <scope>INTERACTION WITH MYD88</scope>
    <scope>PHOSPHORYLATION AT SER-202</scope>
    <scope>ACTIVE SITE</scope>
    <scope>MUTAGENESIS OF CYS-45</scope>
    <scope>DISRUPTION PHENOTYPE</scope>
    <scope>ACTIVITY REGULATION</scope>
    <source>
        <tissue>Bone marrow macrophage</tissue>
        <tissue>Embryonic fibroblast</tissue>
    </source>
</reference>
<proteinExistence type="evidence at protein level"/>
<evidence type="ECO:0000250" key="1">
    <source>
        <dbReference type="UniProtKB" id="Q01804"/>
    </source>
</evidence>
<evidence type="ECO:0000250" key="2">
    <source>
        <dbReference type="UniProtKB" id="Q5VVQ6"/>
    </source>
</evidence>
<evidence type="ECO:0000250" key="3">
    <source>
        <dbReference type="UniProtKB" id="Q96FW1"/>
    </source>
</evidence>
<evidence type="ECO:0000255" key="4">
    <source>
        <dbReference type="PROSITE-ProRule" id="PRU00139"/>
    </source>
</evidence>
<evidence type="ECO:0000256" key="5">
    <source>
        <dbReference type="SAM" id="MobiDB-lite"/>
    </source>
</evidence>
<evidence type="ECO:0000269" key="6">
    <source>
    </source>
</evidence>
<evidence type="ECO:0000303" key="7">
    <source>
    </source>
</evidence>
<evidence type="ECO:0000305" key="8"/>
<evidence type="ECO:0000305" key="9">
    <source>
    </source>
</evidence>
<evidence type="ECO:0000312" key="10">
    <source>
        <dbReference type="EMBL" id="AAI38374.1"/>
    </source>
</evidence>
<evidence type="ECO:0000312" key="11">
    <source>
        <dbReference type="EMBL" id="BAC65711.1"/>
    </source>
</evidence>
<evidence type="ECO:0000312" key="12">
    <source>
        <dbReference type="MGI" id="MGI:1098801"/>
    </source>
</evidence>
<evidence type="ECO:0007744" key="13">
    <source>
    </source>
</evidence>
<evidence type="ECO:0007744" key="14">
    <source>
    </source>
</evidence>
<evidence type="ECO:0007744" key="15">
    <source>
    </source>
</evidence>
<evidence type="ECO:0007744" key="16">
    <source>
    </source>
</evidence>
<organism>
    <name type="scientific">Mus musculus</name>
    <name type="common">Mouse</name>
    <dbReference type="NCBI Taxonomy" id="10090"/>
    <lineage>
        <taxon>Eukaryota</taxon>
        <taxon>Metazoa</taxon>
        <taxon>Chordata</taxon>
        <taxon>Craniata</taxon>
        <taxon>Vertebrata</taxon>
        <taxon>Euteleostomi</taxon>
        <taxon>Mammalia</taxon>
        <taxon>Eutheria</taxon>
        <taxon>Euarchontoglires</taxon>
        <taxon>Glires</taxon>
        <taxon>Rodentia</taxon>
        <taxon>Myomorpha</taxon>
        <taxon>Muroidea</taxon>
        <taxon>Muridae</taxon>
        <taxon>Murinae</taxon>
        <taxon>Mus</taxon>
        <taxon>Mus</taxon>
    </lineage>
</organism>
<protein>
    <recommendedName>
        <fullName evidence="1">OTU domain-containing protein 4</fullName>
        <ecNumber evidence="9">3.4.19.12</ecNumber>
    </recommendedName>
</protein>
<keyword id="KW-0007">Acetylation</keyword>
<keyword id="KW-0963">Cytoplasm</keyword>
<keyword id="KW-0378">Hydrolase</keyword>
<keyword id="KW-0391">Immunity</keyword>
<keyword id="KW-0399">Innate immunity</keyword>
<keyword id="KW-0539">Nucleus</keyword>
<keyword id="KW-0597">Phosphoprotein</keyword>
<keyword id="KW-0645">Protease</keyword>
<keyword id="KW-1185">Reference proteome</keyword>
<keyword id="KW-0788">Thiol protease</keyword>
<keyword id="KW-0833">Ubl conjugation pathway</keyword>
<comment type="function">
    <text evidence="1 6">Deubiquitinase which hydrolyzes the isopeptide bond between the ubiquitin C-terminus and the lysine epsilon-amino group of the target protein. May negatively regulate inflammatory and pathogen recognition signaling in innate immune response. Upon phosphorylation at Ser-202 and Ser-204 residues, via IL-1 receptor and Toll-like receptor signaling pathway, specifically deubiquitinates 'Lys-63'-polyubiquitinated MYD88 adapter protein triggering down-regulation of NF-kappa-B-dependent transcription of inflammatory mediators (PubMed:29395066). Independently of the catalytic activity, acts as a scaffold for alternative deubiquitinases to assemble specific deubiquitinase-substrate complexes. Associates with USP7 and USP9X deubiquitinases to stabilize alkylation repair enzyme ALKBH3, thereby promoting the repair of alkylated DNA lesions (By similarity).</text>
</comment>
<comment type="catalytic activity">
    <reaction evidence="9">
        <text>Thiol-dependent hydrolysis of ester, thioester, amide, peptide and isopeptide bonds formed by the C-terminal Gly of ubiquitin (a 76-residue protein attached to proteins as an intracellular targeting signal).</text>
        <dbReference type="EC" id="3.4.19.12"/>
    </reaction>
</comment>
<comment type="activity regulation">
    <text evidence="9">Phosphorylation on Ser-202 and Ser-204 induces 'Lys-63'-specific deubiquitinase activity.</text>
</comment>
<comment type="subunit">
    <text evidence="1 6">Interacts with MYD88; the interaction is direct (PubMed:29395066). Interacts with ALKBH3; the interaction is direct. Interacts with USP7; the interaction is direct. Interacts with USP9X; the interaction is direct (By similarity).</text>
</comment>
<comment type="subcellular location">
    <subcellularLocation>
        <location evidence="1">Cytoplasm</location>
    </subcellularLocation>
    <subcellularLocation>
        <location evidence="1">Nucleus</location>
    </subcellularLocation>
    <text evidence="1">Primarily cytoplasmic.</text>
</comment>
<comment type="PTM">
    <text evidence="9">Phosphorylation at Ser-202 and Ser-204 activates 'Lys-63'-specific deubiquitinase activity. Induced upon stimulation with IL1B.</text>
</comment>
<comment type="disruption phenotype">
    <text evidence="6">Mice are born at sub-Mendelian rate.</text>
</comment>